<reference key="1">
    <citation type="journal article" date="2002" name="Proc. Natl. Acad. Sci. U.S.A.">
        <title>The Brucella suis genome reveals fundamental similarities between animal and plant pathogens and symbionts.</title>
        <authorList>
            <person name="Paulsen I.T."/>
            <person name="Seshadri R."/>
            <person name="Nelson K.E."/>
            <person name="Eisen J.A."/>
            <person name="Heidelberg J.F."/>
            <person name="Read T.D."/>
            <person name="Dodson R.J."/>
            <person name="Umayam L.A."/>
            <person name="Brinkac L.M."/>
            <person name="Beanan M.J."/>
            <person name="Daugherty S.C."/>
            <person name="DeBoy R.T."/>
            <person name="Durkin A.S."/>
            <person name="Kolonay J.F."/>
            <person name="Madupu R."/>
            <person name="Nelson W.C."/>
            <person name="Ayodeji B."/>
            <person name="Kraul M."/>
            <person name="Shetty J."/>
            <person name="Malek J.A."/>
            <person name="Van Aken S.E."/>
            <person name="Riedmuller S."/>
            <person name="Tettelin H."/>
            <person name="Gill S.R."/>
            <person name="White O."/>
            <person name="Salzberg S.L."/>
            <person name="Hoover D.L."/>
            <person name="Lindler L.E."/>
            <person name="Halling S.M."/>
            <person name="Boyle S.M."/>
            <person name="Fraser C.M."/>
        </authorList>
    </citation>
    <scope>NUCLEOTIDE SEQUENCE [LARGE SCALE GENOMIC DNA]</scope>
    <source>
        <strain>1330</strain>
    </source>
</reference>
<reference key="2">
    <citation type="journal article" date="2011" name="J. Bacteriol.">
        <title>Revised genome sequence of Brucella suis 1330.</title>
        <authorList>
            <person name="Tae H."/>
            <person name="Shallom S."/>
            <person name="Settlage R."/>
            <person name="Preston D."/>
            <person name="Adams L.G."/>
            <person name="Garner H.R."/>
        </authorList>
    </citation>
    <scope>NUCLEOTIDE SEQUENCE [LARGE SCALE GENOMIC DNA]</scope>
    <source>
        <strain>1330</strain>
    </source>
</reference>
<gene>
    <name evidence="1" type="primary">der</name>
    <name type="synonym">engA</name>
    <name type="ordered locus">BR0375</name>
    <name type="ordered locus">BS1330_I0376</name>
</gene>
<organism>
    <name type="scientific">Brucella suis biovar 1 (strain 1330)</name>
    <dbReference type="NCBI Taxonomy" id="204722"/>
    <lineage>
        <taxon>Bacteria</taxon>
        <taxon>Pseudomonadati</taxon>
        <taxon>Pseudomonadota</taxon>
        <taxon>Alphaproteobacteria</taxon>
        <taxon>Hyphomicrobiales</taxon>
        <taxon>Brucellaceae</taxon>
        <taxon>Brucella/Ochrobactrum group</taxon>
        <taxon>Brucella</taxon>
    </lineage>
</organism>
<evidence type="ECO:0000255" key="1">
    <source>
        <dbReference type="HAMAP-Rule" id="MF_00195"/>
    </source>
</evidence>
<feature type="chain" id="PRO_0000178973" description="GTPase Der">
    <location>
        <begin position="1"/>
        <end position="483"/>
    </location>
</feature>
<feature type="domain" description="EngA-type G 1">
    <location>
        <begin position="3"/>
        <end position="167"/>
    </location>
</feature>
<feature type="domain" description="EngA-type G 2">
    <location>
        <begin position="212"/>
        <end position="387"/>
    </location>
</feature>
<feature type="domain" description="KH-like" evidence="1">
    <location>
        <begin position="388"/>
        <end position="472"/>
    </location>
</feature>
<feature type="binding site" evidence="1">
    <location>
        <begin position="9"/>
        <end position="16"/>
    </location>
    <ligand>
        <name>GTP</name>
        <dbReference type="ChEBI" id="CHEBI:37565"/>
        <label>1</label>
    </ligand>
</feature>
<feature type="binding site" evidence="1">
    <location>
        <begin position="56"/>
        <end position="60"/>
    </location>
    <ligand>
        <name>GTP</name>
        <dbReference type="ChEBI" id="CHEBI:37565"/>
        <label>1</label>
    </ligand>
</feature>
<feature type="binding site" evidence="1">
    <location>
        <begin position="119"/>
        <end position="122"/>
    </location>
    <ligand>
        <name>GTP</name>
        <dbReference type="ChEBI" id="CHEBI:37565"/>
        <label>1</label>
    </ligand>
</feature>
<feature type="binding site" evidence="1">
    <location>
        <begin position="218"/>
        <end position="225"/>
    </location>
    <ligand>
        <name>GTP</name>
        <dbReference type="ChEBI" id="CHEBI:37565"/>
        <label>2</label>
    </ligand>
</feature>
<feature type="binding site" evidence="1">
    <location>
        <begin position="265"/>
        <end position="269"/>
    </location>
    <ligand>
        <name>GTP</name>
        <dbReference type="ChEBI" id="CHEBI:37565"/>
        <label>2</label>
    </ligand>
</feature>
<feature type="binding site" evidence="1">
    <location>
        <begin position="330"/>
        <end position="333"/>
    </location>
    <ligand>
        <name>GTP</name>
        <dbReference type="ChEBI" id="CHEBI:37565"/>
        <label>2</label>
    </ligand>
</feature>
<proteinExistence type="inferred from homology"/>
<dbReference type="EMBL" id="AE014291">
    <property type="protein sequence ID" value="AAN29321.1"/>
    <property type="molecule type" value="Genomic_DNA"/>
</dbReference>
<dbReference type="EMBL" id="CP002997">
    <property type="protein sequence ID" value="AEM17734.1"/>
    <property type="molecule type" value="Genomic_DNA"/>
</dbReference>
<dbReference type="RefSeq" id="WP_004688015.1">
    <property type="nucleotide sequence ID" value="NZ_KN046804.1"/>
</dbReference>
<dbReference type="SMR" id="Q8G2E8"/>
<dbReference type="GeneID" id="97534241"/>
<dbReference type="KEGG" id="bms:BR0375"/>
<dbReference type="KEGG" id="bsi:BS1330_I0376"/>
<dbReference type="PATRIC" id="fig|204722.21.peg.2966"/>
<dbReference type="HOGENOM" id="CLU_016077_5_0_5"/>
<dbReference type="PhylomeDB" id="Q8G2E8"/>
<dbReference type="Proteomes" id="UP000007104">
    <property type="component" value="Chromosome I"/>
</dbReference>
<dbReference type="GO" id="GO:0005525">
    <property type="term" value="F:GTP binding"/>
    <property type="evidence" value="ECO:0007669"/>
    <property type="project" value="UniProtKB-UniRule"/>
</dbReference>
<dbReference type="GO" id="GO:0042254">
    <property type="term" value="P:ribosome biogenesis"/>
    <property type="evidence" value="ECO:0007669"/>
    <property type="project" value="UniProtKB-KW"/>
</dbReference>
<dbReference type="CDD" id="cd01894">
    <property type="entry name" value="EngA1"/>
    <property type="match status" value="1"/>
</dbReference>
<dbReference type="CDD" id="cd01895">
    <property type="entry name" value="EngA2"/>
    <property type="match status" value="1"/>
</dbReference>
<dbReference type="FunFam" id="3.30.300.20:FF:000004">
    <property type="entry name" value="GTPase Der"/>
    <property type="match status" value="1"/>
</dbReference>
<dbReference type="FunFam" id="3.40.50.300:FF:000057">
    <property type="entry name" value="GTPase Der"/>
    <property type="match status" value="1"/>
</dbReference>
<dbReference type="Gene3D" id="3.30.300.20">
    <property type="match status" value="1"/>
</dbReference>
<dbReference type="Gene3D" id="3.40.50.300">
    <property type="entry name" value="P-loop containing nucleotide triphosphate hydrolases"/>
    <property type="match status" value="2"/>
</dbReference>
<dbReference type="HAMAP" id="MF_00195">
    <property type="entry name" value="GTPase_Der"/>
    <property type="match status" value="1"/>
</dbReference>
<dbReference type="InterPro" id="IPR031166">
    <property type="entry name" value="G_ENGA"/>
</dbReference>
<dbReference type="InterPro" id="IPR006073">
    <property type="entry name" value="GTP-bd"/>
</dbReference>
<dbReference type="InterPro" id="IPR016484">
    <property type="entry name" value="GTPase_Der"/>
</dbReference>
<dbReference type="InterPro" id="IPR032859">
    <property type="entry name" value="KH_dom-like"/>
</dbReference>
<dbReference type="InterPro" id="IPR015946">
    <property type="entry name" value="KH_dom-like_a/b"/>
</dbReference>
<dbReference type="InterPro" id="IPR027417">
    <property type="entry name" value="P-loop_NTPase"/>
</dbReference>
<dbReference type="InterPro" id="IPR005225">
    <property type="entry name" value="Small_GTP-bd"/>
</dbReference>
<dbReference type="NCBIfam" id="TIGR03594">
    <property type="entry name" value="GTPase_EngA"/>
    <property type="match status" value="1"/>
</dbReference>
<dbReference type="NCBIfam" id="TIGR00231">
    <property type="entry name" value="small_GTP"/>
    <property type="match status" value="2"/>
</dbReference>
<dbReference type="PANTHER" id="PTHR43834">
    <property type="entry name" value="GTPASE DER"/>
    <property type="match status" value="1"/>
</dbReference>
<dbReference type="PANTHER" id="PTHR43834:SF6">
    <property type="entry name" value="GTPASE DER"/>
    <property type="match status" value="1"/>
</dbReference>
<dbReference type="Pfam" id="PF14714">
    <property type="entry name" value="KH_dom-like"/>
    <property type="match status" value="1"/>
</dbReference>
<dbReference type="Pfam" id="PF01926">
    <property type="entry name" value="MMR_HSR1"/>
    <property type="match status" value="2"/>
</dbReference>
<dbReference type="PIRSF" id="PIRSF006485">
    <property type="entry name" value="GTP-binding_EngA"/>
    <property type="match status" value="1"/>
</dbReference>
<dbReference type="PRINTS" id="PR00326">
    <property type="entry name" value="GTP1OBG"/>
</dbReference>
<dbReference type="SUPFAM" id="SSF52540">
    <property type="entry name" value="P-loop containing nucleoside triphosphate hydrolases"/>
    <property type="match status" value="2"/>
</dbReference>
<dbReference type="PROSITE" id="PS51712">
    <property type="entry name" value="G_ENGA"/>
    <property type="match status" value="2"/>
</dbReference>
<comment type="function">
    <text evidence="1">GTPase that plays an essential role in the late steps of ribosome biogenesis.</text>
</comment>
<comment type="subunit">
    <text evidence="1">Associates with the 50S ribosomal subunit.</text>
</comment>
<comment type="similarity">
    <text evidence="1">Belongs to the TRAFAC class TrmE-Era-EngA-EngB-Septin-like GTPase superfamily. EngA (Der) GTPase family.</text>
</comment>
<sequence length="483" mass="53281">MGFTLAIVGRPNVGKSTLFNRLVGRKLALVDDLPGVTRDRRIHDAKLYDLKFQVIDTAGLEEAANDSLEARMRAQTEAAISEADAVLFVIDAKAGITPADSTFAEAVRRSGKPVVLVANKAEARGSEAGMYDAFQLGLGEPCPISAEHGQGMPDLRDAIVELLGEERVFAEERQEEAADEVFTPAAVGALVGDDIEDPDAEEIPAYDATKPLRIAIVGRPNAGKSTLINTMLGEDRLLTGPEAGITRDSISADWEWHGRKIKLFDTAGMRRKARVQEKLEKLSVADGLRAIRFAEVVIIVLDATIPFEKQDLQIADLIIREGRAPVIAFNKWDLIEDRQMVLADLYEKTARLLPQVRGLRAVPISGERGQGIDKLMENVVKTHEIWNRRISTGRLNRWLEGVIAHQPPPAVSGRRLKVKYMTQVKTRPPGFVVSCSRPDAMPQSYVRYLINGLRETFDMPGVPIRLSLRTSDNPFAGRAKKKK</sequence>
<accession>Q8G2E8</accession>
<accession>G0K6J7</accession>
<name>DER_BRUSU</name>
<keyword id="KW-0342">GTP-binding</keyword>
<keyword id="KW-0547">Nucleotide-binding</keyword>
<keyword id="KW-0677">Repeat</keyword>
<keyword id="KW-0690">Ribosome biogenesis</keyword>
<protein>
    <recommendedName>
        <fullName evidence="1">GTPase Der</fullName>
    </recommendedName>
    <alternativeName>
        <fullName evidence="1">GTP-binding protein EngA</fullName>
    </alternativeName>
</protein>